<gene>
    <name evidence="1" type="primary">fmt</name>
    <name type="ordered locus">Plav_0262</name>
</gene>
<keyword id="KW-0648">Protein biosynthesis</keyword>
<keyword id="KW-1185">Reference proteome</keyword>
<keyword id="KW-0808">Transferase</keyword>
<reference key="1">
    <citation type="journal article" date="2011" name="Stand. Genomic Sci.">
        <title>Complete genome sequence of Parvibaculum lavamentivorans type strain (DS-1(T)).</title>
        <authorList>
            <person name="Schleheck D."/>
            <person name="Weiss M."/>
            <person name="Pitluck S."/>
            <person name="Bruce D."/>
            <person name="Land M.L."/>
            <person name="Han S."/>
            <person name="Saunders E."/>
            <person name="Tapia R."/>
            <person name="Detter C."/>
            <person name="Brettin T."/>
            <person name="Han J."/>
            <person name="Woyke T."/>
            <person name="Goodwin L."/>
            <person name="Pennacchio L."/>
            <person name="Nolan M."/>
            <person name="Cook A.M."/>
            <person name="Kjelleberg S."/>
            <person name="Thomas T."/>
        </authorList>
    </citation>
    <scope>NUCLEOTIDE SEQUENCE [LARGE SCALE GENOMIC DNA]</scope>
    <source>
        <strain>DS-1 / DSM 13023 / NCIMB 13966</strain>
    </source>
</reference>
<protein>
    <recommendedName>
        <fullName evidence="1">Methionyl-tRNA formyltransferase</fullName>
        <ecNumber evidence="1">2.1.2.9</ecNumber>
    </recommendedName>
</protein>
<proteinExistence type="inferred from homology"/>
<organism>
    <name type="scientific">Parvibaculum lavamentivorans (strain DS-1 / DSM 13023 / NCIMB 13966)</name>
    <dbReference type="NCBI Taxonomy" id="402881"/>
    <lineage>
        <taxon>Bacteria</taxon>
        <taxon>Pseudomonadati</taxon>
        <taxon>Pseudomonadota</taxon>
        <taxon>Alphaproteobacteria</taxon>
        <taxon>Hyphomicrobiales</taxon>
        <taxon>Parvibaculaceae</taxon>
        <taxon>Parvibaculum</taxon>
    </lineage>
</organism>
<sequence length="310" mass="32716">MKLAFMGTPDFSVPVLAEILAAGHEVVAVYSQPPRKAGRGMAEQPSPVHRFAEEHGIPVFTPVSLKGEAEQQAFASLDLDVAVVVAYGLILPKPVLEAPRLGCLNLHASLLPRWRGAAPIQRAIMAGDAETGVMVMQMEEGLDTGPVLLAERVAIAPDETAGGLHDRLSHIGASLMVRALAALSRGGLAAAPQPEEGVTYARKIEKAEARIDWRRPANELDCHIRGLTPFPGAFFEIARGGETIRVKILRAKPVAKSGEPGKVLDAGESIIIACGEGALEISGLQRAGKAAVTARDFLRGFALKPGESVA</sequence>
<accession>A7HPQ2</accession>
<feature type="chain" id="PRO_1000071662" description="Methionyl-tRNA formyltransferase">
    <location>
        <begin position="1"/>
        <end position="310"/>
    </location>
</feature>
<feature type="binding site" evidence="1">
    <location>
        <begin position="109"/>
        <end position="112"/>
    </location>
    <ligand>
        <name>(6S)-5,6,7,8-tetrahydrofolate</name>
        <dbReference type="ChEBI" id="CHEBI:57453"/>
    </ligand>
</feature>
<name>FMT_PARL1</name>
<dbReference type="EC" id="2.1.2.9" evidence="1"/>
<dbReference type="EMBL" id="CP000774">
    <property type="protein sequence ID" value="ABS61885.1"/>
    <property type="molecule type" value="Genomic_DNA"/>
</dbReference>
<dbReference type="RefSeq" id="WP_011995176.1">
    <property type="nucleotide sequence ID" value="NC_009719.1"/>
</dbReference>
<dbReference type="SMR" id="A7HPQ2"/>
<dbReference type="STRING" id="402881.Plav_0262"/>
<dbReference type="KEGG" id="pla:Plav_0262"/>
<dbReference type="eggNOG" id="COG0223">
    <property type="taxonomic scope" value="Bacteria"/>
</dbReference>
<dbReference type="HOGENOM" id="CLU_033347_1_2_5"/>
<dbReference type="OrthoDB" id="9802815at2"/>
<dbReference type="Proteomes" id="UP000006377">
    <property type="component" value="Chromosome"/>
</dbReference>
<dbReference type="GO" id="GO:0005829">
    <property type="term" value="C:cytosol"/>
    <property type="evidence" value="ECO:0007669"/>
    <property type="project" value="TreeGrafter"/>
</dbReference>
<dbReference type="GO" id="GO:0004479">
    <property type="term" value="F:methionyl-tRNA formyltransferase activity"/>
    <property type="evidence" value="ECO:0007669"/>
    <property type="project" value="UniProtKB-UniRule"/>
</dbReference>
<dbReference type="CDD" id="cd08646">
    <property type="entry name" value="FMT_core_Met-tRNA-FMT_N"/>
    <property type="match status" value="1"/>
</dbReference>
<dbReference type="CDD" id="cd08704">
    <property type="entry name" value="Met_tRNA_FMT_C"/>
    <property type="match status" value="1"/>
</dbReference>
<dbReference type="FunFam" id="3.40.50.12230:FF:000001">
    <property type="entry name" value="Methionyl-tRNA formyltransferase"/>
    <property type="match status" value="1"/>
</dbReference>
<dbReference type="Gene3D" id="3.40.50.12230">
    <property type="match status" value="1"/>
</dbReference>
<dbReference type="HAMAP" id="MF_00182">
    <property type="entry name" value="Formyl_trans"/>
    <property type="match status" value="1"/>
</dbReference>
<dbReference type="InterPro" id="IPR005794">
    <property type="entry name" value="Fmt"/>
</dbReference>
<dbReference type="InterPro" id="IPR005793">
    <property type="entry name" value="Formyl_trans_C"/>
</dbReference>
<dbReference type="InterPro" id="IPR002376">
    <property type="entry name" value="Formyl_transf_N"/>
</dbReference>
<dbReference type="InterPro" id="IPR036477">
    <property type="entry name" value="Formyl_transf_N_sf"/>
</dbReference>
<dbReference type="InterPro" id="IPR011034">
    <property type="entry name" value="Formyl_transferase-like_C_sf"/>
</dbReference>
<dbReference type="InterPro" id="IPR001555">
    <property type="entry name" value="GART_AS"/>
</dbReference>
<dbReference type="InterPro" id="IPR044135">
    <property type="entry name" value="Met-tRNA-FMT_C"/>
</dbReference>
<dbReference type="InterPro" id="IPR041711">
    <property type="entry name" value="Met-tRNA-FMT_N"/>
</dbReference>
<dbReference type="NCBIfam" id="TIGR00460">
    <property type="entry name" value="fmt"/>
    <property type="match status" value="1"/>
</dbReference>
<dbReference type="PANTHER" id="PTHR11138">
    <property type="entry name" value="METHIONYL-TRNA FORMYLTRANSFERASE"/>
    <property type="match status" value="1"/>
</dbReference>
<dbReference type="PANTHER" id="PTHR11138:SF5">
    <property type="entry name" value="METHIONYL-TRNA FORMYLTRANSFERASE, MITOCHONDRIAL"/>
    <property type="match status" value="1"/>
</dbReference>
<dbReference type="Pfam" id="PF02911">
    <property type="entry name" value="Formyl_trans_C"/>
    <property type="match status" value="1"/>
</dbReference>
<dbReference type="Pfam" id="PF00551">
    <property type="entry name" value="Formyl_trans_N"/>
    <property type="match status" value="1"/>
</dbReference>
<dbReference type="SUPFAM" id="SSF50486">
    <property type="entry name" value="FMT C-terminal domain-like"/>
    <property type="match status" value="1"/>
</dbReference>
<dbReference type="SUPFAM" id="SSF53328">
    <property type="entry name" value="Formyltransferase"/>
    <property type="match status" value="1"/>
</dbReference>
<dbReference type="PROSITE" id="PS00373">
    <property type="entry name" value="GART"/>
    <property type="match status" value="1"/>
</dbReference>
<comment type="function">
    <text evidence="1">Attaches a formyl group to the free amino group of methionyl-tRNA(fMet). The formyl group appears to play a dual role in the initiator identity of N-formylmethionyl-tRNA by promoting its recognition by IF2 and preventing the misappropriation of this tRNA by the elongation apparatus.</text>
</comment>
<comment type="catalytic activity">
    <reaction evidence="1">
        <text>L-methionyl-tRNA(fMet) + (6R)-10-formyltetrahydrofolate = N-formyl-L-methionyl-tRNA(fMet) + (6S)-5,6,7,8-tetrahydrofolate + H(+)</text>
        <dbReference type="Rhea" id="RHEA:24380"/>
        <dbReference type="Rhea" id="RHEA-COMP:9952"/>
        <dbReference type="Rhea" id="RHEA-COMP:9953"/>
        <dbReference type="ChEBI" id="CHEBI:15378"/>
        <dbReference type="ChEBI" id="CHEBI:57453"/>
        <dbReference type="ChEBI" id="CHEBI:78530"/>
        <dbReference type="ChEBI" id="CHEBI:78844"/>
        <dbReference type="ChEBI" id="CHEBI:195366"/>
        <dbReference type="EC" id="2.1.2.9"/>
    </reaction>
</comment>
<comment type="similarity">
    <text evidence="1">Belongs to the Fmt family.</text>
</comment>
<evidence type="ECO:0000255" key="1">
    <source>
        <dbReference type="HAMAP-Rule" id="MF_00182"/>
    </source>
</evidence>